<dbReference type="EMBL" id="CP000572">
    <property type="protein sequence ID" value="ABN91715.1"/>
    <property type="status" value="ALT_INIT"/>
    <property type="molecule type" value="Genomic_DNA"/>
</dbReference>
<dbReference type="SMR" id="A3NWZ4"/>
<dbReference type="KEGG" id="bpl:BURPS1106A_2612"/>
<dbReference type="HOGENOM" id="CLU_002472_4_1_4"/>
<dbReference type="Proteomes" id="UP000006738">
    <property type="component" value="Chromosome I"/>
</dbReference>
<dbReference type="GO" id="GO:0005829">
    <property type="term" value="C:cytosol"/>
    <property type="evidence" value="ECO:0007669"/>
    <property type="project" value="TreeGrafter"/>
</dbReference>
<dbReference type="GO" id="GO:0005524">
    <property type="term" value="F:ATP binding"/>
    <property type="evidence" value="ECO:0007669"/>
    <property type="project" value="UniProtKB-UniRule"/>
</dbReference>
<dbReference type="GO" id="GO:0140664">
    <property type="term" value="F:ATP-dependent DNA damage sensor activity"/>
    <property type="evidence" value="ECO:0007669"/>
    <property type="project" value="InterPro"/>
</dbReference>
<dbReference type="GO" id="GO:0003684">
    <property type="term" value="F:damaged DNA binding"/>
    <property type="evidence" value="ECO:0007669"/>
    <property type="project" value="UniProtKB-UniRule"/>
</dbReference>
<dbReference type="GO" id="GO:0030983">
    <property type="term" value="F:mismatched DNA binding"/>
    <property type="evidence" value="ECO:0007669"/>
    <property type="project" value="InterPro"/>
</dbReference>
<dbReference type="GO" id="GO:0006298">
    <property type="term" value="P:mismatch repair"/>
    <property type="evidence" value="ECO:0007669"/>
    <property type="project" value="UniProtKB-UniRule"/>
</dbReference>
<dbReference type="CDD" id="cd03284">
    <property type="entry name" value="ABC_MutS1"/>
    <property type="match status" value="1"/>
</dbReference>
<dbReference type="FunFam" id="3.40.1170.10:FF:000001">
    <property type="entry name" value="DNA mismatch repair protein MutS"/>
    <property type="match status" value="1"/>
</dbReference>
<dbReference type="FunFam" id="3.40.50.300:FF:000870">
    <property type="entry name" value="MutS protein homolog 4"/>
    <property type="match status" value="1"/>
</dbReference>
<dbReference type="Gene3D" id="1.10.1420.10">
    <property type="match status" value="2"/>
</dbReference>
<dbReference type="Gene3D" id="6.10.140.430">
    <property type="match status" value="1"/>
</dbReference>
<dbReference type="Gene3D" id="3.40.1170.10">
    <property type="entry name" value="DNA repair protein MutS, domain I"/>
    <property type="match status" value="1"/>
</dbReference>
<dbReference type="Gene3D" id="3.30.420.110">
    <property type="entry name" value="MutS, connector domain"/>
    <property type="match status" value="1"/>
</dbReference>
<dbReference type="Gene3D" id="3.40.50.300">
    <property type="entry name" value="P-loop containing nucleotide triphosphate hydrolases"/>
    <property type="match status" value="1"/>
</dbReference>
<dbReference type="HAMAP" id="MF_00096">
    <property type="entry name" value="MutS"/>
    <property type="match status" value="1"/>
</dbReference>
<dbReference type="InterPro" id="IPR005748">
    <property type="entry name" value="DNA_mismatch_repair_MutS"/>
</dbReference>
<dbReference type="InterPro" id="IPR007695">
    <property type="entry name" value="DNA_mismatch_repair_MutS-lik_N"/>
</dbReference>
<dbReference type="InterPro" id="IPR017261">
    <property type="entry name" value="DNA_mismatch_repair_MutS/MSH"/>
</dbReference>
<dbReference type="InterPro" id="IPR000432">
    <property type="entry name" value="DNA_mismatch_repair_MutS_C"/>
</dbReference>
<dbReference type="InterPro" id="IPR007861">
    <property type="entry name" value="DNA_mismatch_repair_MutS_clamp"/>
</dbReference>
<dbReference type="InterPro" id="IPR007696">
    <property type="entry name" value="DNA_mismatch_repair_MutS_core"/>
</dbReference>
<dbReference type="InterPro" id="IPR016151">
    <property type="entry name" value="DNA_mismatch_repair_MutS_N"/>
</dbReference>
<dbReference type="InterPro" id="IPR036187">
    <property type="entry name" value="DNA_mismatch_repair_MutS_sf"/>
</dbReference>
<dbReference type="InterPro" id="IPR007860">
    <property type="entry name" value="DNA_mmatch_repair_MutS_con_dom"/>
</dbReference>
<dbReference type="InterPro" id="IPR045076">
    <property type="entry name" value="MutS"/>
</dbReference>
<dbReference type="InterPro" id="IPR036678">
    <property type="entry name" value="MutS_con_dom_sf"/>
</dbReference>
<dbReference type="InterPro" id="IPR027417">
    <property type="entry name" value="P-loop_NTPase"/>
</dbReference>
<dbReference type="NCBIfam" id="TIGR01070">
    <property type="entry name" value="mutS1"/>
    <property type="match status" value="1"/>
</dbReference>
<dbReference type="NCBIfam" id="NF003810">
    <property type="entry name" value="PRK05399.1"/>
    <property type="match status" value="1"/>
</dbReference>
<dbReference type="PANTHER" id="PTHR11361:SF34">
    <property type="entry name" value="DNA MISMATCH REPAIR PROTEIN MSH1, MITOCHONDRIAL"/>
    <property type="match status" value="1"/>
</dbReference>
<dbReference type="PANTHER" id="PTHR11361">
    <property type="entry name" value="DNA MISMATCH REPAIR PROTEIN MUTS FAMILY MEMBER"/>
    <property type="match status" value="1"/>
</dbReference>
<dbReference type="Pfam" id="PF01624">
    <property type="entry name" value="MutS_I"/>
    <property type="match status" value="1"/>
</dbReference>
<dbReference type="Pfam" id="PF05188">
    <property type="entry name" value="MutS_II"/>
    <property type="match status" value="1"/>
</dbReference>
<dbReference type="Pfam" id="PF05192">
    <property type="entry name" value="MutS_III"/>
    <property type="match status" value="1"/>
</dbReference>
<dbReference type="Pfam" id="PF05190">
    <property type="entry name" value="MutS_IV"/>
    <property type="match status" value="1"/>
</dbReference>
<dbReference type="Pfam" id="PF00488">
    <property type="entry name" value="MutS_V"/>
    <property type="match status" value="1"/>
</dbReference>
<dbReference type="PIRSF" id="PIRSF037677">
    <property type="entry name" value="DNA_mis_repair_Msh6"/>
    <property type="match status" value="1"/>
</dbReference>
<dbReference type="SMART" id="SM00534">
    <property type="entry name" value="MUTSac"/>
    <property type="match status" value="1"/>
</dbReference>
<dbReference type="SMART" id="SM00533">
    <property type="entry name" value="MUTSd"/>
    <property type="match status" value="1"/>
</dbReference>
<dbReference type="SUPFAM" id="SSF55271">
    <property type="entry name" value="DNA repair protein MutS, domain I"/>
    <property type="match status" value="1"/>
</dbReference>
<dbReference type="SUPFAM" id="SSF53150">
    <property type="entry name" value="DNA repair protein MutS, domain II"/>
    <property type="match status" value="1"/>
</dbReference>
<dbReference type="SUPFAM" id="SSF48334">
    <property type="entry name" value="DNA repair protein MutS, domain III"/>
    <property type="match status" value="1"/>
</dbReference>
<dbReference type="SUPFAM" id="SSF52540">
    <property type="entry name" value="P-loop containing nucleoside triphosphate hydrolases"/>
    <property type="match status" value="1"/>
</dbReference>
<dbReference type="PROSITE" id="PS00486">
    <property type="entry name" value="DNA_MISMATCH_REPAIR_2"/>
    <property type="match status" value="1"/>
</dbReference>
<sequence length="891" mass="96385">MATQIDASSEAAAATAAAQHTPMMQQYLRIKSEHPDTLVFYRMGDFYELFFEDAEKAARLLDLTLTQRGASAGTPIKMAGVPHHAVEQYLAKLVKFGESAAICEQIGDPATSKGPVERKVVRVVTPGTLTDAALLSDKSDVFLLALCVGHNKRGVASNIGLAWLNLASGALRLAELAPDQLGAALERIRPAEILAADGTIESVPAGMGAITRVPAWHFDIASGTQRLCDQLEVASLDGFGAQALTSANGAAGALLIYAAATQGQQLRHVRSLKVENESEYIGLDPSTRRNLELTETLRGTESPTLYSLLDTCCTAMGSRLLRHWLHHPPRASVAAQARHQAIGALLDAPPNAGLDSLRSALRQIADVERITGRLALLSARPRDLSSLRDTFAALPALRERVAEIASNAAALGRLEAALEPPPGCLDLLTRAIAAEPAAMVRDGGVIARGYDAELDELRDISENCGQFLIDLETRERARTGISNLRVEYNKVHGFYIEVTRGQTDKVPDDYRRRQTLKNAERYITPELKTFEDKALSAQERALARERALYDGVLQALLPHIEGCQRVASGLAELDLLAAFAERARTLDWVAPEFTDEIGIEIDQGRHPVVEAQVEQFIANDCALNPERKLLLITGPNMGGKSTFMRQTALIALMAYVGSYVPAKAARFGPIDRIFTRIGAADDLAGGRSTFMVEMTEAAAILNDATPHSLVLMDEIGRGTSTFDGLALAWAIARHLLSHNRCYTLFATHYFELTQLPAEFPQAANVHLSAVEHGHGIVFLHAVEEGPANQSYGLQVAQLAGVPAPVIRAARKHLEHLEQQSAAQATPQLDLFAAPPVVDEPECNEPPAAATPHPALERLLELDPDDLKPRDALDLLYELHTLARSGPADAQR</sequence>
<feature type="chain" id="PRO_0000335129" description="DNA mismatch repair protein MutS">
    <location>
        <begin position="1"/>
        <end position="891"/>
    </location>
</feature>
<feature type="binding site" evidence="1">
    <location>
        <begin position="634"/>
        <end position="641"/>
    </location>
    <ligand>
        <name>ATP</name>
        <dbReference type="ChEBI" id="CHEBI:30616"/>
    </ligand>
</feature>
<gene>
    <name evidence="1" type="primary">mutS</name>
    <name type="ordered locus">BURPS1106A_2612</name>
</gene>
<evidence type="ECO:0000255" key="1">
    <source>
        <dbReference type="HAMAP-Rule" id="MF_00096"/>
    </source>
</evidence>
<evidence type="ECO:0000305" key="2"/>
<accession>A3NWZ4</accession>
<keyword id="KW-0067">ATP-binding</keyword>
<keyword id="KW-0227">DNA damage</keyword>
<keyword id="KW-0234">DNA repair</keyword>
<keyword id="KW-0238">DNA-binding</keyword>
<keyword id="KW-0547">Nucleotide-binding</keyword>
<organism>
    <name type="scientific">Burkholderia pseudomallei (strain 1106a)</name>
    <dbReference type="NCBI Taxonomy" id="357348"/>
    <lineage>
        <taxon>Bacteria</taxon>
        <taxon>Pseudomonadati</taxon>
        <taxon>Pseudomonadota</taxon>
        <taxon>Betaproteobacteria</taxon>
        <taxon>Burkholderiales</taxon>
        <taxon>Burkholderiaceae</taxon>
        <taxon>Burkholderia</taxon>
        <taxon>pseudomallei group</taxon>
    </lineage>
</organism>
<protein>
    <recommendedName>
        <fullName evidence="1">DNA mismatch repair protein MutS</fullName>
    </recommendedName>
</protein>
<name>MUTS_BURP0</name>
<reference key="1">
    <citation type="journal article" date="2010" name="Genome Biol. Evol.">
        <title>Continuing evolution of Burkholderia mallei through genome reduction and large-scale rearrangements.</title>
        <authorList>
            <person name="Losada L."/>
            <person name="Ronning C.M."/>
            <person name="DeShazer D."/>
            <person name="Woods D."/>
            <person name="Fedorova N."/>
            <person name="Kim H.S."/>
            <person name="Shabalina S.A."/>
            <person name="Pearson T.R."/>
            <person name="Brinkac L."/>
            <person name="Tan P."/>
            <person name="Nandi T."/>
            <person name="Crabtree J."/>
            <person name="Badger J."/>
            <person name="Beckstrom-Sternberg S."/>
            <person name="Saqib M."/>
            <person name="Schutzer S.E."/>
            <person name="Keim P."/>
            <person name="Nierman W.C."/>
        </authorList>
    </citation>
    <scope>NUCLEOTIDE SEQUENCE [LARGE SCALE GENOMIC DNA]</scope>
    <source>
        <strain>1106a</strain>
    </source>
</reference>
<comment type="function">
    <text evidence="1">This protein is involved in the repair of mismatches in DNA. It is possible that it carries out the mismatch recognition step. This protein has a weak ATPase activity.</text>
</comment>
<comment type="similarity">
    <text evidence="1">Belongs to the DNA mismatch repair MutS family.</text>
</comment>
<comment type="sequence caution" evidence="2">
    <conflict type="erroneous initiation">
        <sequence resource="EMBL-CDS" id="ABN91715"/>
    </conflict>
</comment>
<proteinExistence type="inferred from homology"/>